<dbReference type="EC" id="7.-.-.-" evidence="1"/>
<dbReference type="EMBL" id="AE017245">
    <property type="protein sequence ID" value="AAZ44066.1"/>
    <property type="molecule type" value="Genomic_DNA"/>
</dbReference>
<dbReference type="RefSeq" id="WP_011283795.1">
    <property type="nucleotide sequence ID" value="NC_007294.1"/>
</dbReference>
<dbReference type="SMR" id="Q4A5A5"/>
<dbReference type="STRING" id="262723.MS53_0659"/>
<dbReference type="KEGG" id="msy:MS53_0659"/>
<dbReference type="eggNOG" id="COG1122">
    <property type="taxonomic scope" value="Bacteria"/>
</dbReference>
<dbReference type="HOGENOM" id="CLU_000604_1_22_14"/>
<dbReference type="OrthoDB" id="9784332at2"/>
<dbReference type="Proteomes" id="UP000000549">
    <property type="component" value="Chromosome"/>
</dbReference>
<dbReference type="GO" id="GO:0043190">
    <property type="term" value="C:ATP-binding cassette (ABC) transporter complex"/>
    <property type="evidence" value="ECO:0007669"/>
    <property type="project" value="TreeGrafter"/>
</dbReference>
<dbReference type="GO" id="GO:0005524">
    <property type="term" value="F:ATP binding"/>
    <property type="evidence" value="ECO:0007669"/>
    <property type="project" value="UniProtKB-KW"/>
</dbReference>
<dbReference type="GO" id="GO:0016887">
    <property type="term" value="F:ATP hydrolysis activity"/>
    <property type="evidence" value="ECO:0007669"/>
    <property type="project" value="InterPro"/>
</dbReference>
<dbReference type="GO" id="GO:0042626">
    <property type="term" value="F:ATPase-coupled transmembrane transporter activity"/>
    <property type="evidence" value="ECO:0007669"/>
    <property type="project" value="TreeGrafter"/>
</dbReference>
<dbReference type="CDD" id="cd03225">
    <property type="entry name" value="ABC_cobalt_CbiO_domain1"/>
    <property type="match status" value="1"/>
</dbReference>
<dbReference type="FunFam" id="3.40.50.300:FF:000224">
    <property type="entry name" value="Energy-coupling factor transporter ATP-binding protein EcfA"/>
    <property type="match status" value="1"/>
</dbReference>
<dbReference type="Gene3D" id="3.40.50.300">
    <property type="entry name" value="P-loop containing nucleotide triphosphate hydrolases"/>
    <property type="match status" value="1"/>
</dbReference>
<dbReference type="InterPro" id="IPR003593">
    <property type="entry name" value="AAA+_ATPase"/>
</dbReference>
<dbReference type="InterPro" id="IPR003439">
    <property type="entry name" value="ABC_transporter-like_ATP-bd"/>
</dbReference>
<dbReference type="InterPro" id="IPR017871">
    <property type="entry name" value="ABC_transporter-like_CS"/>
</dbReference>
<dbReference type="InterPro" id="IPR015856">
    <property type="entry name" value="ABC_transpr_CbiO/EcfA_su"/>
</dbReference>
<dbReference type="InterPro" id="IPR050095">
    <property type="entry name" value="ECF_ABC_transporter_ATP-bd"/>
</dbReference>
<dbReference type="InterPro" id="IPR030947">
    <property type="entry name" value="EcfA_1"/>
</dbReference>
<dbReference type="InterPro" id="IPR027417">
    <property type="entry name" value="P-loop_NTPase"/>
</dbReference>
<dbReference type="NCBIfam" id="TIGR04520">
    <property type="entry name" value="ECF_ATPase_1"/>
    <property type="match status" value="1"/>
</dbReference>
<dbReference type="NCBIfam" id="NF010167">
    <property type="entry name" value="PRK13648.1"/>
    <property type="match status" value="1"/>
</dbReference>
<dbReference type="PANTHER" id="PTHR43553:SF24">
    <property type="entry name" value="ENERGY-COUPLING FACTOR TRANSPORTER ATP-BINDING PROTEIN ECFA1"/>
    <property type="match status" value="1"/>
</dbReference>
<dbReference type="PANTHER" id="PTHR43553">
    <property type="entry name" value="HEAVY METAL TRANSPORTER"/>
    <property type="match status" value="1"/>
</dbReference>
<dbReference type="Pfam" id="PF00005">
    <property type="entry name" value="ABC_tran"/>
    <property type="match status" value="1"/>
</dbReference>
<dbReference type="SMART" id="SM00382">
    <property type="entry name" value="AAA"/>
    <property type="match status" value="1"/>
</dbReference>
<dbReference type="SUPFAM" id="SSF52540">
    <property type="entry name" value="P-loop containing nucleoside triphosphate hydrolases"/>
    <property type="match status" value="1"/>
</dbReference>
<dbReference type="PROSITE" id="PS00211">
    <property type="entry name" value="ABC_TRANSPORTER_1"/>
    <property type="match status" value="1"/>
</dbReference>
<dbReference type="PROSITE" id="PS50893">
    <property type="entry name" value="ABC_TRANSPORTER_2"/>
    <property type="match status" value="1"/>
</dbReference>
<dbReference type="PROSITE" id="PS51246">
    <property type="entry name" value="CBIO"/>
    <property type="match status" value="1"/>
</dbReference>
<name>ECFA1_MYCS5</name>
<reference key="1">
    <citation type="journal article" date="2005" name="J. Bacteriol.">
        <title>Swine and poultry pathogens: the complete genome sequences of two strains of Mycoplasma hyopneumoniae and a strain of Mycoplasma synoviae.</title>
        <authorList>
            <person name="Vasconcelos A.T.R."/>
            <person name="Ferreira H.B."/>
            <person name="Bizarro C.V."/>
            <person name="Bonatto S.L."/>
            <person name="Carvalho M.O."/>
            <person name="Pinto P.M."/>
            <person name="Almeida D.F."/>
            <person name="Almeida L.G.P."/>
            <person name="Almeida R."/>
            <person name="Alves-Junior L."/>
            <person name="Assuncao E.N."/>
            <person name="Azevedo V.A.C."/>
            <person name="Bogo M.R."/>
            <person name="Brigido M.M."/>
            <person name="Brocchi M."/>
            <person name="Burity H.A."/>
            <person name="Camargo A.A."/>
            <person name="Camargo S.S."/>
            <person name="Carepo M.S."/>
            <person name="Carraro D.M."/>
            <person name="de Mattos Cascardo J.C."/>
            <person name="Castro L.A."/>
            <person name="Cavalcanti G."/>
            <person name="Chemale G."/>
            <person name="Collevatti R.G."/>
            <person name="Cunha C.W."/>
            <person name="Dallagiovanna B."/>
            <person name="Dambros B.P."/>
            <person name="Dellagostin O.A."/>
            <person name="Falcao C."/>
            <person name="Fantinatti-Garboggini F."/>
            <person name="Felipe M.S.S."/>
            <person name="Fiorentin L."/>
            <person name="Franco G.R."/>
            <person name="Freitas N.S.A."/>
            <person name="Frias D."/>
            <person name="Grangeiro T.B."/>
            <person name="Grisard E.C."/>
            <person name="Guimaraes C.T."/>
            <person name="Hungria M."/>
            <person name="Jardim S.N."/>
            <person name="Krieger M.A."/>
            <person name="Laurino J.P."/>
            <person name="Lima L.F.A."/>
            <person name="Lopes M.I."/>
            <person name="Loreto E.L.S."/>
            <person name="Madeira H.M.F."/>
            <person name="Manfio G.P."/>
            <person name="Maranhao A.Q."/>
            <person name="Martinkovics C.T."/>
            <person name="Medeiros S.R.B."/>
            <person name="Moreira M.A.M."/>
            <person name="Neiva M."/>
            <person name="Ramalho-Neto C.E."/>
            <person name="Nicolas M.F."/>
            <person name="Oliveira S.C."/>
            <person name="Paixao R.F.C."/>
            <person name="Pedrosa F.O."/>
            <person name="Pena S.D.J."/>
            <person name="Pereira M."/>
            <person name="Pereira-Ferrari L."/>
            <person name="Piffer I."/>
            <person name="Pinto L.S."/>
            <person name="Potrich D.P."/>
            <person name="Salim A.C.M."/>
            <person name="Santos F.R."/>
            <person name="Schmitt R."/>
            <person name="Schneider M.P.C."/>
            <person name="Schrank A."/>
            <person name="Schrank I.S."/>
            <person name="Schuck A.F."/>
            <person name="Seuanez H.N."/>
            <person name="Silva D.W."/>
            <person name="Silva R."/>
            <person name="Silva S.C."/>
            <person name="Soares C.M.A."/>
            <person name="Souza K.R.L."/>
            <person name="Souza R.C."/>
            <person name="Staats C.C."/>
            <person name="Steffens M.B.R."/>
            <person name="Teixeira S.M.R."/>
            <person name="Urmenyi T.P."/>
            <person name="Vainstein M.H."/>
            <person name="Zuccherato L.W."/>
            <person name="Simpson A.J.G."/>
            <person name="Zaha A."/>
        </authorList>
    </citation>
    <scope>NUCLEOTIDE SEQUENCE [LARGE SCALE GENOMIC DNA]</scope>
    <source>
        <strain>53</strain>
    </source>
</reference>
<feature type="chain" id="PRO_0000287974" description="Energy-coupling factor transporter ATP-binding protein EcfA1">
    <location>
        <begin position="1"/>
        <end position="266"/>
    </location>
</feature>
<feature type="domain" description="ABC transporter" evidence="1">
    <location>
        <begin position="2"/>
        <end position="237"/>
    </location>
</feature>
<feature type="binding site" evidence="1">
    <location>
        <begin position="37"/>
        <end position="44"/>
    </location>
    <ligand>
        <name>ATP</name>
        <dbReference type="ChEBI" id="CHEBI:30616"/>
    </ligand>
</feature>
<comment type="function">
    <text evidence="1">ATP-binding (A) component of a common energy-coupling factor (ECF) ABC-transporter complex. Unlike classic ABC transporters this ECF transporter provides the energy necessary to transport a number of different substrates.</text>
</comment>
<comment type="subunit">
    <text evidence="1">Forms a stable energy-coupling factor (ECF) transporter complex composed of 2 membrane-embedded substrate-binding proteins (S component), 2 ATP-binding proteins (A component) and 2 transmembrane proteins (T component).</text>
</comment>
<comment type="subcellular location">
    <subcellularLocation>
        <location evidence="1">Cell membrane</location>
        <topology evidence="1">Peripheral membrane protein</topology>
    </subcellularLocation>
</comment>
<comment type="similarity">
    <text evidence="1">Belongs to the ABC transporter superfamily. Energy-coupling factor EcfA family.</text>
</comment>
<sequence>MIKLNNVTFRYRPSDENPAINNVSLEIKKGQYVAILGHNGSGKSTLSKILVALLKPQKGELFIDGIQYSKENLKEIRKKIGIIFQNPDNQFIGSTVEDDIAFGLENKNISRDEMRTKVVEYAKVVDMEKHLSREPEYLSGGQKQRVAIASVLALDPEVIIFDEVTSMLDPKGKSKVIQIIKQIQADKDKTLISITHDMDEAILADTVLVFAKGKLVAAGSPKDILNEEKIIEIAKIASPFIYKISKHINGIEPTYVEEELISQICK</sequence>
<gene>
    <name evidence="1" type="primary">ecfA1</name>
    <name type="synonym">cbiO1</name>
    <name type="ordered locus">MS53_0659</name>
</gene>
<organism>
    <name type="scientific">Mycoplasmopsis synoviae (strain 53)</name>
    <name type="common">Mycoplasma synoviae</name>
    <dbReference type="NCBI Taxonomy" id="262723"/>
    <lineage>
        <taxon>Bacteria</taxon>
        <taxon>Bacillati</taxon>
        <taxon>Mycoplasmatota</taxon>
        <taxon>Mycoplasmoidales</taxon>
        <taxon>Metamycoplasmataceae</taxon>
        <taxon>Mycoplasmopsis</taxon>
    </lineage>
</organism>
<evidence type="ECO:0000255" key="1">
    <source>
        <dbReference type="HAMAP-Rule" id="MF_01710"/>
    </source>
</evidence>
<proteinExistence type="inferred from homology"/>
<keyword id="KW-0067">ATP-binding</keyword>
<keyword id="KW-1003">Cell membrane</keyword>
<keyword id="KW-0472">Membrane</keyword>
<keyword id="KW-0547">Nucleotide-binding</keyword>
<keyword id="KW-1185">Reference proteome</keyword>
<keyword id="KW-1278">Translocase</keyword>
<keyword id="KW-0813">Transport</keyword>
<accession>Q4A5A5</accession>
<protein>
    <recommendedName>
        <fullName evidence="1">Energy-coupling factor transporter ATP-binding protein EcfA1</fullName>
        <shortName evidence="1">ECF transporter A component EcfA1</shortName>
        <ecNumber evidence="1">7.-.-.-</ecNumber>
    </recommendedName>
</protein>